<protein>
    <recommendedName>
        <fullName evidence="1">Transcription antitermination protein NusB</fullName>
    </recommendedName>
    <alternativeName>
        <fullName evidence="1">Antitermination factor NusB</fullName>
    </alternativeName>
</protein>
<dbReference type="EMBL" id="CR555306">
    <property type="protein sequence ID" value="CAI08140.1"/>
    <property type="molecule type" value="Genomic_DNA"/>
</dbReference>
<dbReference type="RefSeq" id="WP_011237833.1">
    <property type="nucleotide sequence ID" value="NC_006513.1"/>
</dbReference>
<dbReference type="SMR" id="Q5P3H4"/>
<dbReference type="STRING" id="76114.ebA3564"/>
<dbReference type="KEGG" id="eba:ebA3564"/>
<dbReference type="eggNOG" id="COG0781">
    <property type="taxonomic scope" value="Bacteria"/>
</dbReference>
<dbReference type="HOGENOM" id="CLU_087843_4_1_4"/>
<dbReference type="OrthoDB" id="9789556at2"/>
<dbReference type="Proteomes" id="UP000006552">
    <property type="component" value="Chromosome"/>
</dbReference>
<dbReference type="GO" id="GO:0005829">
    <property type="term" value="C:cytosol"/>
    <property type="evidence" value="ECO:0007669"/>
    <property type="project" value="TreeGrafter"/>
</dbReference>
<dbReference type="GO" id="GO:0003723">
    <property type="term" value="F:RNA binding"/>
    <property type="evidence" value="ECO:0007669"/>
    <property type="project" value="UniProtKB-UniRule"/>
</dbReference>
<dbReference type="GO" id="GO:0006353">
    <property type="term" value="P:DNA-templated transcription termination"/>
    <property type="evidence" value="ECO:0007669"/>
    <property type="project" value="UniProtKB-UniRule"/>
</dbReference>
<dbReference type="GO" id="GO:0031564">
    <property type="term" value="P:transcription antitermination"/>
    <property type="evidence" value="ECO:0007669"/>
    <property type="project" value="UniProtKB-KW"/>
</dbReference>
<dbReference type="Gene3D" id="1.10.940.10">
    <property type="entry name" value="NusB-like"/>
    <property type="match status" value="1"/>
</dbReference>
<dbReference type="HAMAP" id="MF_00073">
    <property type="entry name" value="NusB"/>
    <property type="match status" value="1"/>
</dbReference>
<dbReference type="InterPro" id="IPR035926">
    <property type="entry name" value="NusB-like_sf"/>
</dbReference>
<dbReference type="InterPro" id="IPR011605">
    <property type="entry name" value="NusB_fam"/>
</dbReference>
<dbReference type="InterPro" id="IPR006027">
    <property type="entry name" value="NusB_RsmB_TIM44"/>
</dbReference>
<dbReference type="NCBIfam" id="TIGR01951">
    <property type="entry name" value="nusB"/>
    <property type="match status" value="1"/>
</dbReference>
<dbReference type="PANTHER" id="PTHR11078:SF3">
    <property type="entry name" value="ANTITERMINATION NUSB DOMAIN-CONTAINING PROTEIN"/>
    <property type="match status" value="1"/>
</dbReference>
<dbReference type="PANTHER" id="PTHR11078">
    <property type="entry name" value="N UTILIZATION SUBSTANCE PROTEIN B-RELATED"/>
    <property type="match status" value="1"/>
</dbReference>
<dbReference type="Pfam" id="PF01029">
    <property type="entry name" value="NusB"/>
    <property type="match status" value="1"/>
</dbReference>
<dbReference type="SUPFAM" id="SSF48013">
    <property type="entry name" value="NusB-like"/>
    <property type="match status" value="1"/>
</dbReference>
<keyword id="KW-1185">Reference proteome</keyword>
<keyword id="KW-0694">RNA-binding</keyword>
<keyword id="KW-0804">Transcription</keyword>
<keyword id="KW-0889">Transcription antitermination</keyword>
<keyword id="KW-0805">Transcription regulation</keyword>
<feature type="chain" id="PRO_0000265480" description="Transcription antitermination protein NusB">
    <location>
        <begin position="1"/>
        <end position="145"/>
    </location>
</feature>
<reference key="1">
    <citation type="journal article" date="2005" name="Arch. Microbiol.">
        <title>The genome sequence of an anaerobic aromatic-degrading denitrifying bacterium, strain EbN1.</title>
        <authorList>
            <person name="Rabus R."/>
            <person name="Kube M."/>
            <person name="Heider J."/>
            <person name="Beck A."/>
            <person name="Heitmann K."/>
            <person name="Widdel F."/>
            <person name="Reinhardt R."/>
        </authorList>
    </citation>
    <scope>NUCLEOTIDE SEQUENCE [LARGE SCALE GENOMIC DNA]</scope>
    <source>
        <strain>DSM 19018 / LMG 30748 / EbN1</strain>
    </source>
</reference>
<evidence type="ECO:0000255" key="1">
    <source>
        <dbReference type="HAMAP-Rule" id="MF_00073"/>
    </source>
</evidence>
<accession>Q5P3H4</accession>
<name>NUSB_AROAE</name>
<proteinExistence type="inferred from homology"/>
<sequence length="145" mass="16267">MSSKAARRRAREFALQGIYQWLLSANSMLLIEEHVSQVSGFDKADRELFISLLRGTLNNVDDLQAEFAPFIHRAVHELSPVERAILLLATHELKHNLDTPYRVIINEAIELAKSYGGTDGHRFVNGVLDKLATQLRVTEVSAGRS</sequence>
<organism>
    <name type="scientific">Aromatoleum aromaticum (strain DSM 19018 / LMG 30748 / EbN1)</name>
    <name type="common">Azoarcus sp. (strain EbN1)</name>
    <dbReference type="NCBI Taxonomy" id="76114"/>
    <lineage>
        <taxon>Bacteria</taxon>
        <taxon>Pseudomonadati</taxon>
        <taxon>Pseudomonadota</taxon>
        <taxon>Betaproteobacteria</taxon>
        <taxon>Rhodocyclales</taxon>
        <taxon>Rhodocyclaceae</taxon>
        <taxon>Aromatoleum</taxon>
    </lineage>
</organism>
<comment type="function">
    <text evidence="1">Involved in transcription antitermination. Required for transcription of ribosomal RNA (rRNA) genes. Binds specifically to the boxA antiterminator sequence of the ribosomal RNA (rrn) operons.</text>
</comment>
<comment type="similarity">
    <text evidence="1">Belongs to the NusB family.</text>
</comment>
<gene>
    <name evidence="1" type="primary">nusB</name>
    <name type="ordered locus">AZOSEA20150</name>
    <name type="ORF">ebA3564</name>
</gene>